<dbReference type="EC" id="2.1.1.-" evidence="7"/>
<dbReference type="EMBL" id="HG792019">
    <property type="protein sequence ID" value="CDM36722.1"/>
    <property type="molecule type" value="Genomic_DNA"/>
</dbReference>
<dbReference type="SMR" id="W6R4H4"/>
<dbReference type="STRING" id="1365484.W6R4H4"/>
<dbReference type="OMA" id="TRWEWIE"/>
<dbReference type="OrthoDB" id="1535081at2759"/>
<dbReference type="UniPathway" id="UPA00213"/>
<dbReference type="Proteomes" id="UP000030686">
    <property type="component" value="Unassembled WGS sequence"/>
</dbReference>
<dbReference type="GO" id="GO:0005829">
    <property type="term" value="C:cytosol"/>
    <property type="evidence" value="ECO:0000250"/>
    <property type="project" value="GO_Central"/>
</dbReference>
<dbReference type="GO" id="GO:0008168">
    <property type="term" value="F:methyltransferase activity"/>
    <property type="evidence" value="ECO:0000250"/>
    <property type="project" value="GO_Central"/>
</dbReference>
<dbReference type="GO" id="GO:0008171">
    <property type="term" value="F:O-methyltransferase activity"/>
    <property type="evidence" value="ECO:0007669"/>
    <property type="project" value="InterPro"/>
</dbReference>
<dbReference type="GO" id="GO:0032259">
    <property type="term" value="P:methylation"/>
    <property type="evidence" value="ECO:0007669"/>
    <property type="project" value="UniProtKB-KW"/>
</dbReference>
<dbReference type="GO" id="GO:0140722">
    <property type="term" value="P:mycophenolic acid biosynthetic process"/>
    <property type="evidence" value="ECO:0000250"/>
    <property type="project" value="GO_Central"/>
</dbReference>
<dbReference type="GO" id="GO:0016114">
    <property type="term" value="P:terpenoid biosynthetic process"/>
    <property type="evidence" value="ECO:0007669"/>
    <property type="project" value="UniProtKB-UniPathway"/>
</dbReference>
<dbReference type="Gene3D" id="3.40.50.150">
    <property type="entry name" value="Vaccinia Virus protein VP39"/>
    <property type="match status" value="1"/>
</dbReference>
<dbReference type="Gene3D" id="1.10.10.10">
    <property type="entry name" value="Winged helix-like DNA-binding domain superfamily/Winged helix DNA-binding domain"/>
    <property type="match status" value="1"/>
</dbReference>
<dbReference type="InterPro" id="IPR016461">
    <property type="entry name" value="COMT-like"/>
</dbReference>
<dbReference type="InterPro" id="IPR001077">
    <property type="entry name" value="O_MeTrfase_dom"/>
</dbReference>
<dbReference type="InterPro" id="IPR029063">
    <property type="entry name" value="SAM-dependent_MTases_sf"/>
</dbReference>
<dbReference type="InterPro" id="IPR036388">
    <property type="entry name" value="WH-like_DNA-bd_sf"/>
</dbReference>
<dbReference type="InterPro" id="IPR036390">
    <property type="entry name" value="WH_DNA-bd_sf"/>
</dbReference>
<dbReference type="PANTHER" id="PTHR43712:SF1">
    <property type="entry name" value="HYPOTHETICAL O-METHYLTRANSFERASE (EUROFUNG)-RELATED"/>
    <property type="match status" value="1"/>
</dbReference>
<dbReference type="PANTHER" id="PTHR43712">
    <property type="entry name" value="PUTATIVE (AFU_ORTHOLOGUE AFUA_4G14580)-RELATED"/>
    <property type="match status" value="1"/>
</dbReference>
<dbReference type="Pfam" id="PF00891">
    <property type="entry name" value="Methyltransf_2"/>
    <property type="match status" value="1"/>
</dbReference>
<dbReference type="PIRSF" id="PIRSF005739">
    <property type="entry name" value="O-mtase"/>
    <property type="match status" value="1"/>
</dbReference>
<dbReference type="SUPFAM" id="SSF53335">
    <property type="entry name" value="S-adenosyl-L-methionine-dependent methyltransferases"/>
    <property type="match status" value="1"/>
</dbReference>
<dbReference type="SUPFAM" id="SSF46785">
    <property type="entry name" value="Winged helix' DNA-binding domain"/>
    <property type="match status" value="1"/>
</dbReference>
<dbReference type="PROSITE" id="PS51683">
    <property type="entry name" value="SAM_OMT_II"/>
    <property type="match status" value="1"/>
</dbReference>
<gene>
    <name evidence="5" type="primary">mpaG</name>
    <name type="ORF">PROQFM164_S05g000555</name>
</gene>
<comment type="function">
    <text evidence="1 4 7">O-methyltransferase; part of the gene cluster that mediates the biosynthesis of mycophenolic acid (MPA), the first isolated antibiotic natural product in the world obtained from a culture of Penicillium brevicompactum in 1893 (PubMed:26751579). MpaC methylates farnesyl-DHMP-3C (FDHMP-3C) to yield MFDHMP-3C (By similarity). The first step of the pathway is the synthesis of 5-methylorsellinic acid (5MOA) by the cytosolic polyketide synthase mpaC. 5MOA is then converted to the phthalide compound 5,7-dihydroxy-4,6-dimethylphthalide (DHMP) by the endoplasmic reticulum-bound cytochrome P450 monooxygenase mpaDE. MpaDE first catalyzes hydroxylation of 5-MOA to 4,6-dihydroxy-2-(hydroxymethyl)-3-methylbenzoic acid (DHMB). MpaDE then acts as a lactone synthase that catalyzes the ring closure to convert DHMB into DHMP. The next step is the prenylation of DHMP by the Golgi apparatus-associated prenyltransferase mpaA to yield farnesyl-DHMP (FDHMP). The ER-bound oxygenase mpaB then mediates the oxidative cleavage the C19-C20 double bond in FDHMP to yield FDHMP-3C via a mycophenolic aldehyde intermediate. The O-methyltransferase mpaG catalyzes the methylation of FDHMP-3C to yield MFDHMP-3C. After the cytosolic methylation of FDHMP-3C, MFDHMP-3C enters into peroxisomes probably via free diffusion due to its low molecular weight. Upon a peroxisomal CoA ligation reaction, catalyzed by a beta-oxidation component enzyme acyl-CoA ligase ACL891, MFDHMP-3C-CoA would then be restricted to peroxisomes for the following beta-oxidation pathway steps. The peroxisomal beta-oxidation machinery than converts MFDHMP-3C-CoA into MPA_CoA, via a beta-oxidation chain-shortening process. Finally mpaH acts as a peroxisomal acyl-CoA hydrolase with high substrate specificity toward MPA-CoA to release the final product MPA (Probable) (PubMed:26751579).</text>
</comment>
<comment type="catalytic activity">
    <reaction evidence="1">
        <text>(4E,8E)-10-(4,6-dihydroxy-7-methyl-3-oxo-1,3-dihydro-2-benzofuran-5-yl)-4,8-dimethyldeca-4,8-dienoate + S-adenosyl-L-methionine = (4E,8E)-10-(4-hydroxy-6-methoxy-7-methyl-3-oxo-1,3-dihydro-2-benzofuran-5-yl)-4,8-dimethyldeca-4,8-dienoate + S-adenosyl-L-homocysteine + H(+)</text>
        <dbReference type="Rhea" id="RHEA:66696"/>
        <dbReference type="ChEBI" id="CHEBI:15378"/>
        <dbReference type="ChEBI" id="CHEBI:57856"/>
        <dbReference type="ChEBI" id="CHEBI:59789"/>
        <dbReference type="ChEBI" id="CHEBI:167389"/>
        <dbReference type="ChEBI" id="CHEBI:167390"/>
    </reaction>
    <physiologicalReaction direction="left-to-right" evidence="1">
        <dbReference type="Rhea" id="RHEA:66697"/>
    </physiologicalReaction>
</comment>
<comment type="pathway">
    <text evidence="4">Secondary metabolite biosynthesis; terpenoid biosynthesis.</text>
</comment>
<comment type="subcellular location">
    <subcellularLocation>
        <location evidence="1">Cytoplasm</location>
        <location evidence="1">Cytosol</location>
    </subcellularLocation>
</comment>
<comment type="disruption phenotype">
    <text evidence="4">Results in dramatic reduction in MPA production and leads to the accumulation of DMMPA.</text>
</comment>
<comment type="similarity">
    <text evidence="6">Belongs to the class I-like SAM-binding methyltransferase superfamily. Cation-independent O-methyltransferase family. COMT subfamily.</text>
</comment>
<keyword id="KW-0963">Cytoplasm</keyword>
<keyword id="KW-0489">Methyltransferase</keyword>
<keyword id="KW-1185">Reference proteome</keyword>
<keyword id="KW-0949">S-adenosyl-L-methionine</keyword>
<keyword id="KW-0808">Transferase</keyword>
<proteinExistence type="inferred from homology"/>
<reference key="1">
    <citation type="journal article" date="2014" name="Nat. Commun.">
        <title>Multiple recent horizontal transfers of a large genomic region in cheese making fungi.</title>
        <authorList>
            <person name="Cheeseman K."/>
            <person name="Ropars J."/>
            <person name="Renault P."/>
            <person name="Dupont J."/>
            <person name="Gouzy J."/>
            <person name="Branca A."/>
            <person name="Abraham A.-L."/>
            <person name="Ceppi M."/>
            <person name="Conseiller E."/>
            <person name="Debuchy R."/>
            <person name="Malagnac F."/>
            <person name="Goarin A."/>
            <person name="Silar P."/>
            <person name="Lacoste S."/>
            <person name="Sallet E."/>
            <person name="Bensimon A."/>
            <person name="Giraud T."/>
            <person name="Brygoo Y."/>
        </authorList>
    </citation>
    <scope>NUCLEOTIDE SEQUENCE [LARGE SCALE GENOMIC DNA]</scope>
    <source>
        <strain>FM164</strain>
    </source>
</reference>
<reference key="2">
    <citation type="journal article" date="2016" name="PLoS ONE">
        <title>Identification and functional analysis of the mycophenolic acid gene cluster of Penicillium roqueforti.</title>
        <authorList>
            <person name="Del-Cid A."/>
            <person name="Gil-Duran C."/>
            <person name="Vaca I."/>
            <person name="Rojas-Aedo J.F."/>
            <person name="Garcia-Rico R.O."/>
            <person name="Levican G."/>
            <person name="Chavez R."/>
        </authorList>
    </citation>
    <scope>FUNCTION</scope>
    <scope>DISRUPTION PHENOTYPE</scope>
    <scope>CATALYVITY</scope>
    <scope>PATHWAY</scope>
</reference>
<organism>
    <name type="scientific">Penicillium roqueforti (strain FM164)</name>
    <dbReference type="NCBI Taxonomy" id="1365484"/>
    <lineage>
        <taxon>Eukaryota</taxon>
        <taxon>Fungi</taxon>
        <taxon>Dikarya</taxon>
        <taxon>Ascomycota</taxon>
        <taxon>Pezizomycotina</taxon>
        <taxon>Eurotiomycetes</taxon>
        <taxon>Eurotiomycetidae</taxon>
        <taxon>Eurotiales</taxon>
        <taxon>Aspergillaceae</taxon>
        <taxon>Penicillium</taxon>
    </lineage>
</organism>
<name>MPAG_PENRF</name>
<accession>W6R4H4</accession>
<sequence>MLTKSVTSILQGITLAAKEFENNEAGARESLIAHSRALISALEVPSEFIQHTFWSQPALSAIIRLAADVNMFQHLKDAAGKGIDCEALSMKTGVDASLLSRLARHLVAMNVITFQNGAFHGTDLSDSLAAENYQHSIRFCHDVSRPSFNEFPEFFKSNGYKTPTLSGTDGPFQAAHKTELTFLQWLVNTHPYLQYFHSYMSVYRAGKQNWCDTGFYPVSERLLSGFDASVSDVVLVDVGGGRGHDLETFASKFSPLPGRLVLQDREQTIASMPADESRQFEATAHNIFTPQPVKYARAYYMHSVPHGFGDEDAIKIMANLVPALAKGYSRVLLNEIVVSEENPILAATNMDMIMLAHLAVKERTEAEWRYIFTQAGLKVVNIYSYPGVAESLIEAELA</sequence>
<evidence type="ECO:0000250" key="1">
    <source>
        <dbReference type="UniProtKB" id="A0A0B5L781"/>
    </source>
</evidence>
<evidence type="ECO:0000250" key="2">
    <source>
        <dbReference type="UniProtKB" id="F1DBB3"/>
    </source>
</evidence>
<evidence type="ECO:0000255" key="3">
    <source>
        <dbReference type="PROSITE-ProRule" id="PRU01020"/>
    </source>
</evidence>
<evidence type="ECO:0000269" key="4">
    <source>
    </source>
</evidence>
<evidence type="ECO:0000303" key="5">
    <source>
    </source>
</evidence>
<evidence type="ECO:0000305" key="6"/>
<evidence type="ECO:0000305" key="7">
    <source>
    </source>
</evidence>
<feature type="chain" id="PRO_0000449218" description="O-methyltransferase mpaG">
    <location>
        <begin position="1"/>
        <end position="398"/>
    </location>
</feature>
<feature type="active site" description="Proton acceptor" evidence="3">
    <location>
        <position position="306"/>
    </location>
</feature>
<feature type="active site" evidence="2">
    <location>
        <position position="335"/>
    </location>
</feature>
<feature type="active site" evidence="2">
    <location>
        <position position="362"/>
    </location>
</feature>
<feature type="binding site" evidence="3">
    <location>
        <position position="264"/>
    </location>
    <ligand>
        <name>S-adenosyl-L-methionine</name>
        <dbReference type="ChEBI" id="CHEBI:59789"/>
    </ligand>
</feature>
<protein>
    <recommendedName>
        <fullName evidence="5">O-methyltransferase mpaG</fullName>
        <ecNumber evidence="7">2.1.1.-</ecNumber>
    </recommendedName>
    <alternativeName>
        <fullName evidence="5">Mycophenolic acid biosynthesis cluster protein G</fullName>
    </alternativeName>
</protein>